<accession>Q02282</accession>
<organism>
    <name type="scientific">Feline immunodeficiency virus (isolate TM2)</name>
    <name type="common">FIV</name>
    <dbReference type="NCBI Taxonomy" id="31676"/>
    <lineage>
        <taxon>Viruses</taxon>
        <taxon>Riboviria</taxon>
        <taxon>Pararnavirae</taxon>
        <taxon>Artverviricota</taxon>
        <taxon>Revtraviricetes</taxon>
        <taxon>Ortervirales</taxon>
        <taxon>Retroviridae</taxon>
        <taxon>Orthoretrovirinae</taxon>
        <taxon>Lentivirus</taxon>
        <taxon>Feline immunodeficiency virus</taxon>
    </lineage>
</organism>
<proteinExistence type="inferred from homology"/>
<sequence>MAEGGFTHNQQWIGPEEAEELLDFDIAVQMNEEGPLNPGVNPFRVPGITSQEKDDYCKILQTKLQELKNEVKEVKIEEGNAGKFRRARYLRYSDENVLSIVYLLIGYLRYLIDHRSLGSLRHDIDIETPQEEHYNNSEKGTTLNIKYGRRCCISTFIMYLILFAGVGIWLGARAQVVWRLPPLVVPVDDTEIIFWDCWAPEEPACQDFLGTMIYLKANVNISIQEGPTLGNWAREIWSTLFKKATRQCRRGRIWRRWNETITGPLGCANNTCYNISVVVPDYQCYVDRVDTWLQGKVNISLCLTGGKMLYNKETRQLSYCTDPLQIPLINYTFGPNQTCMWNTSLIKDSEIPKCGWWNQVAYYDTCKWEEANVTFQCHRTQSQSGSWIRTISSWKQRNRWEWRPDFESEKVKISLQCNSTKNLTFAMRSSSDYYDVQGAWIEFGCHRNKSKRHSEARFRIRCKWNEGNNISLIDTCGTNPNVTGANPVDCTMKANTMYNCSLQDSFTMKIEDLIVHFNMTKAVELYNIAGNWSCTSDLPKGWGYMNCNCTNGTDNSETKMACPKNQGILRNWYNPVAGLRQALIKYQVVKQPEYLIVPEEVMQYKFKQKRAAIHIMLALATVLSMAGAGTGATAIGMVTQYHQVLATHQQALEKITEALKINNLRLITLEHQVLVIGLRVEAIEKFLYTAFAMQELGCNQNQFFCKIPPSLWSMYNMTLNQTIWNHGNISLGNWYNQTRDLQNKFYEIIMDIEQNNVQGKTGIQQLQKWENWVGWIGKIPQYLKGLLGSVLGIGLGILLLLICLPTLVDCIRNCTNKILGYTVIAMPEIDDEEVHLSVELRRNGRQCGISEKEEE</sequence>
<keyword id="KW-0165">Cleavage on pair of basic residues</keyword>
<keyword id="KW-0175">Coiled coil</keyword>
<keyword id="KW-1015">Disulfide bond</keyword>
<keyword id="KW-0325">Glycoprotein</keyword>
<keyword id="KW-1032">Host cell membrane</keyword>
<keyword id="KW-1043">Host membrane</keyword>
<keyword id="KW-0945">Host-virus interaction</keyword>
<keyword id="KW-0472">Membrane</keyword>
<keyword id="KW-0812">Transmembrane</keyword>
<keyword id="KW-1133">Transmembrane helix</keyword>
<keyword id="KW-1161">Viral attachment to host cell</keyword>
<keyword id="KW-0261">Viral envelope protein</keyword>
<keyword id="KW-0946">Virion</keyword>
<keyword id="KW-1160">Virus entry into host cell</keyword>
<comment type="function">
    <text evidence="1">The surface protein (SU) attaches the virus to the host cell by binding to its receptor. This interaction triggers the refolding of the transmembrane protein (TM) and is thought to activate its fusogenic potential by unmasking its fusion peptide. Fusion occurs at the host cell plasma membrane (By similarity).</text>
</comment>
<comment type="function">
    <text evidence="1">The transmembrane protein (TM) acts as a class I viral fusion protein. Under the current model, the protein has at least 3 conformational states: pre-fusion native state, pre-hairpin intermediate state, and post-fusion hairpin state. During viral and target cell membrane fusion, the coiled coil regions (heptad repeats) assume a trimer-of-hairpins structure, positioning the fusion peptide in close proximity to the C-terminal region of the ectodomain. The formation of this structure appears to drive apposition and subsequent fusion of viral and target cell membranes. Membranes fusion leads to delivery of the nucleocapsid into the cytoplasm (By similarity).</text>
</comment>
<comment type="subunit">
    <text evidence="1">The mature envelope protein (Env) consists of a trimer of SU-TM heterodimers attached by noncovalent interactions or by a labile interchain disulfide bond.</text>
</comment>
<comment type="subcellular location">
    <molecule>Transmembrane protein</molecule>
    <subcellularLocation>
        <location evidence="1">Virion membrane</location>
        <topology evidence="1">Single-pass type I membrane protein</topology>
    </subcellularLocation>
    <subcellularLocation>
        <location evidence="1">Host cell membrane</location>
        <topology evidence="1">Single-pass type I membrane protein</topology>
    </subcellularLocation>
    <text evidence="1">It is probably concentrated at the site of budding and incorporated into the virions possibly by contacts between the cytoplasmic tail of Env and the N-terminus of Gag.</text>
</comment>
<comment type="subcellular location">
    <molecule>Surface protein</molecule>
    <subcellularLocation>
        <location evidence="1">Virion membrane</location>
        <topology evidence="1">Peripheral membrane protein</topology>
    </subcellularLocation>
    <subcellularLocation>
        <location evidence="1">Host cell membrane</location>
        <topology evidence="1">Peripheral membrane protein</topology>
    </subcellularLocation>
    <text evidence="1">The surface protein is not anchored to the viral envelope, but associates with the extravirion surface through its binding to TM. It is probably concentrated at the site of budding and incorporated into the virions possibly by contacts between the cytoplasmic tail of Env and the N-terminus of Gag (By similarity).</text>
</comment>
<comment type="PTM">
    <text evidence="1">Specific enzymatic cleavages in vivo yield mature proteins. Envelope glycoproteins are synthesized as an inactive precursor that is N-glycosylated and processed likely by host cell furin or by a furin-like protease in the Golgi to yield the mature SU and TM proteins. The cleavage site between SU and TM requires the minimal sequence [KR]-X-[KR]-R (By similarity).</text>
</comment>
<gene>
    <name type="primary">env</name>
</gene>
<evidence type="ECO:0000250" key="1"/>
<evidence type="ECO:0000255" key="2"/>
<name>ENV_FIVT2</name>
<protein>
    <recommendedName>
        <fullName>Envelope glycoprotein gp150</fullName>
    </recommendedName>
    <alternativeName>
        <fullName>Env polyprotein</fullName>
    </alternativeName>
    <component>
        <recommendedName>
            <fullName>Surface protein</fullName>
            <shortName>SU</shortName>
        </recommendedName>
        <alternativeName>
            <fullName>Glycoprotein 100</fullName>
            <shortName>gp100</shortName>
        </alternativeName>
    </component>
    <component>
        <recommendedName>
            <fullName>Transmembrane protein</fullName>
            <shortName>TM</shortName>
        </recommendedName>
        <alternativeName>
            <fullName>Glycoprotein 36</fullName>
            <shortName>gp36</shortName>
        </alternativeName>
    </component>
</protein>
<organismHost>
    <name type="scientific">Felidae</name>
    <name type="common">cat family</name>
    <dbReference type="NCBI Taxonomy" id="9681"/>
</organismHost>
<dbReference type="EMBL" id="M59418">
    <property type="protein sequence ID" value="AAA43074.1"/>
    <property type="molecule type" value="Genomic_RNA"/>
</dbReference>
<dbReference type="PIR" id="F45557">
    <property type="entry name" value="F45557"/>
</dbReference>
<dbReference type="GlyCosmos" id="Q02282">
    <property type="glycosylation" value="24 sites, No reported glycans"/>
</dbReference>
<dbReference type="GO" id="GO:0020002">
    <property type="term" value="C:host cell plasma membrane"/>
    <property type="evidence" value="ECO:0007669"/>
    <property type="project" value="UniProtKB-SubCell"/>
</dbReference>
<dbReference type="GO" id="GO:0016020">
    <property type="term" value="C:membrane"/>
    <property type="evidence" value="ECO:0007669"/>
    <property type="project" value="UniProtKB-KW"/>
</dbReference>
<dbReference type="GO" id="GO:0019031">
    <property type="term" value="C:viral envelope"/>
    <property type="evidence" value="ECO:0007669"/>
    <property type="project" value="UniProtKB-KW"/>
</dbReference>
<dbReference type="GO" id="GO:0055036">
    <property type="term" value="C:virion membrane"/>
    <property type="evidence" value="ECO:0007669"/>
    <property type="project" value="UniProtKB-SubCell"/>
</dbReference>
<dbReference type="GO" id="GO:0005198">
    <property type="term" value="F:structural molecule activity"/>
    <property type="evidence" value="ECO:0007669"/>
    <property type="project" value="InterPro"/>
</dbReference>
<dbReference type="GO" id="GO:0046718">
    <property type="term" value="P:symbiont entry into host cell"/>
    <property type="evidence" value="ECO:0007669"/>
    <property type="project" value="UniProtKB-KW"/>
</dbReference>
<dbReference type="GO" id="GO:0019062">
    <property type="term" value="P:virion attachment to host cell"/>
    <property type="evidence" value="ECO:0007669"/>
    <property type="project" value="UniProtKB-KW"/>
</dbReference>
<dbReference type="CDD" id="cd09909">
    <property type="entry name" value="HIV-1-like_HR1-HR2"/>
    <property type="match status" value="1"/>
</dbReference>
<dbReference type="InterPro" id="IPR018582">
    <property type="entry name" value="Envelope_glycop_lentivirus"/>
</dbReference>
<dbReference type="InterPro" id="IPR000328">
    <property type="entry name" value="GP41-like"/>
</dbReference>
<dbReference type="Pfam" id="PF09590">
    <property type="entry name" value="Env-gp36"/>
    <property type="match status" value="1"/>
</dbReference>
<reference key="1">
    <citation type="journal article" date="1991" name="J. Virol.">
        <title>Identification of feline immunodeficiency virus rev gene activity.</title>
        <authorList>
            <person name="Kiyomasu T."/>
            <person name="Miyazawa T."/>
            <person name="Furuya T."/>
            <person name="Shibata R."/>
            <person name="Sakai H."/>
            <person name="Sakuragi J.I."/>
            <person name="Fukasawa M."/>
            <person name="Maki N."/>
            <person name="Hasegawa A."/>
            <person name="Mikami T."/>
            <person name="Adachi A."/>
        </authorList>
    </citation>
    <scope>NUCLEOTIDE SEQUENCE [GENOMIC RNA]</scope>
</reference>
<reference key="2">
    <citation type="journal article" date="1992" name="Arch. Virol.">
        <title>Molecular characterization and heterogeneity of feline immunodeficiency virus isolates.</title>
        <authorList>
            <person name="Maki N."/>
            <person name="Miyazawa T."/>
            <person name="Fukasawa M."/>
            <person name="Hasegawa A."/>
            <person name="Hayami M."/>
            <person name="Miki K."/>
            <person name="Mikami T."/>
        </authorList>
    </citation>
    <scope>NUCLEOTIDE SEQUENCE [GENOMIC RNA]</scope>
</reference>
<feature type="chain" id="PRO_0000239534" description="Envelope glycoprotein gp150">
    <location>
        <begin position="1"/>
        <end position="855"/>
    </location>
</feature>
<feature type="chain" id="PRO_0000038721" description="Surface protein" evidence="1">
    <location>
        <begin position="1"/>
        <end position="610"/>
    </location>
</feature>
<feature type="chain" id="PRO_0000038722" description="Transmembrane protein" evidence="1">
    <location>
        <begin position="611"/>
        <end position="855"/>
    </location>
</feature>
<feature type="topological domain" description="Extracellular" evidence="2">
    <location>
        <begin position="1"/>
        <end position="784"/>
    </location>
</feature>
<feature type="transmembrane region" description="Helical" evidence="2">
    <location>
        <begin position="785"/>
        <end position="805"/>
    </location>
</feature>
<feature type="topological domain" description="Cytoplasmic" evidence="2">
    <location>
        <begin position="806"/>
        <end position="855"/>
    </location>
</feature>
<feature type="region of interest" description="Fusion peptide" evidence="2">
    <location>
        <begin position="615"/>
        <end position="635"/>
    </location>
</feature>
<feature type="region of interest" description="Immunosuppression" evidence="1">
    <location>
        <begin position="661"/>
        <end position="679"/>
    </location>
</feature>
<feature type="coiled-coil region" evidence="2">
    <location>
        <begin position="642"/>
        <end position="692"/>
    </location>
</feature>
<feature type="coiled-coil region" evidence="2">
    <location>
        <begin position="735"/>
        <end position="771"/>
    </location>
</feature>
<feature type="site" description="Cleavage; by host" evidence="1">
    <location>
        <begin position="610"/>
        <end position="611"/>
    </location>
</feature>
<feature type="glycosylation site" description="N-linked (GlcNAc...) asparagine; by host" evidence="2">
    <location>
        <position position="135"/>
    </location>
</feature>
<feature type="glycosylation site" description="N-linked (GlcNAc...) asparagine; by host" evidence="2">
    <location>
        <position position="220"/>
    </location>
</feature>
<feature type="glycosylation site" description="N-linked (GlcNAc...) asparagine; by host" evidence="2">
    <location>
        <position position="258"/>
    </location>
</feature>
<feature type="glycosylation site" description="N-linked (GlcNAc...) asparagine; by host" evidence="2">
    <location>
        <position position="269"/>
    </location>
</feature>
<feature type="glycosylation site" description="N-linked (GlcNAc...) asparagine; by host" evidence="2">
    <location>
        <position position="274"/>
    </location>
</feature>
<feature type="glycosylation site" description="N-linked (GlcNAc...) asparagine; by host" evidence="2">
    <location>
        <position position="298"/>
    </location>
</feature>
<feature type="glycosylation site" description="N-linked (GlcNAc...) asparagine; by host" evidence="2">
    <location>
        <position position="330"/>
    </location>
</feature>
<feature type="glycosylation site" description="N-linked (GlcNAc...) asparagine; by host" evidence="2">
    <location>
        <position position="336"/>
    </location>
</feature>
<feature type="glycosylation site" description="N-linked (GlcNAc...) asparagine; by host" evidence="2">
    <location>
        <position position="342"/>
    </location>
</feature>
<feature type="glycosylation site" description="N-linked (GlcNAc...) asparagine; by host" evidence="2">
    <location>
        <position position="372"/>
    </location>
</feature>
<feature type="glycosylation site" description="N-linked (GlcNAc...) asparagine; by host" evidence="2">
    <location>
        <position position="418"/>
    </location>
</feature>
<feature type="glycosylation site" description="N-linked (GlcNAc...) asparagine; by host" evidence="2">
    <location>
        <position position="422"/>
    </location>
</feature>
<feature type="glycosylation site" description="N-linked (GlcNAc...) asparagine; by host" evidence="2">
    <location>
        <position position="448"/>
    </location>
</feature>
<feature type="glycosylation site" description="N-linked (GlcNAc...) asparagine; by host" evidence="2">
    <location>
        <position position="469"/>
    </location>
</feature>
<feature type="glycosylation site" description="N-linked (GlcNAc...) asparagine; by host" evidence="2">
    <location>
        <position position="481"/>
    </location>
</feature>
<feature type="glycosylation site" description="N-linked (GlcNAc...) asparagine; by host" evidence="2">
    <location>
        <position position="499"/>
    </location>
</feature>
<feature type="glycosylation site" description="N-linked (GlcNAc...) asparagine; by host" evidence="2">
    <location>
        <position position="518"/>
    </location>
</feature>
<feature type="glycosylation site" description="N-linked (GlcNAc...) asparagine; by host" evidence="2">
    <location>
        <position position="531"/>
    </location>
</feature>
<feature type="glycosylation site" description="N-linked (GlcNAc...) asparagine; by host" evidence="2">
    <location>
        <position position="548"/>
    </location>
</feature>
<feature type="glycosylation site" description="N-linked (GlcNAc...) asparagine; by host" evidence="2">
    <location>
        <position position="551"/>
    </location>
</feature>
<feature type="glycosylation site" description="N-linked (GlcNAc...) asparagine; by host" evidence="2">
    <location>
        <position position="716"/>
    </location>
</feature>
<feature type="glycosylation site" description="N-linked (GlcNAc...) asparagine; by host" evidence="2">
    <location>
        <position position="720"/>
    </location>
</feature>
<feature type="glycosylation site" description="N-linked (GlcNAc...) asparagine; by host" evidence="2">
    <location>
        <position position="728"/>
    </location>
</feature>
<feature type="glycosylation site" description="N-linked (GlcNAc...) asparagine; by host" evidence="2">
    <location>
        <position position="736"/>
    </location>
</feature>